<comment type="function">
    <text evidence="1">Involved in coproporphyrin-dependent heme b biosynthesis. Catalyzes the decarboxylation of Fe-coproporphyrin III (coproheme) to heme b (protoheme IX), the last step of the pathway. The reaction occurs in a stepwise manner with a three-propionate intermediate.</text>
</comment>
<comment type="catalytic activity">
    <reaction evidence="1">
        <text>Fe-coproporphyrin III + 2 H2O2 + 2 H(+) = heme b + 2 CO2 + 4 H2O</text>
        <dbReference type="Rhea" id="RHEA:56516"/>
        <dbReference type="ChEBI" id="CHEBI:15377"/>
        <dbReference type="ChEBI" id="CHEBI:15378"/>
        <dbReference type="ChEBI" id="CHEBI:16240"/>
        <dbReference type="ChEBI" id="CHEBI:16526"/>
        <dbReference type="ChEBI" id="CHEBI:60344"/>
        <dbReference type="ChEBI" id="CHEBI:68438"/>
        <dbReference type="EC" id="1.3.98.5"/>
    </reaction>
    <physiologicalReaction direction="left-to-right" evidence="1">
        <dbReference type="Rhea" id="RHEA:56517"/>
    </physiologicalReaction>
</comment>
<comment type="catalytic activity">
    <reaction evidence="1">
        <text>Fe-coproporphyrin III + H2O2 + H(+) = harderoheme III + CO2 + 2 H2O</text>
        <dbReference type="Rhea" id="RHEA:57940"/>
        <dbReference type="ChEBI" id="CHEBI:15377"/>
        <dbReference type="ChEBI" id="CHEBI:15378"/>
        <dbReference type="ChEBI" id="CHEBI:16240"/>
        <dbReference type="ChEBI" id="CHEBI:16526"/>
        <dbReference type="ChEBI" id="CHEBI:68438"/>
        <dbReference type="ChEBI" id="CHEBI:142463"/>
    </reaction>
    <physiologicalReaction direction="left-to-right" evidence="1">
        <dbReference type="Rhea" id="RHEA:57941"/>
    </physiologicalReaction>
</comment>
<comment type="catalytic activity">
    <reaction evidence="1">
        <text>harderoheme III + H2O2 + H(+) = heme b + CO2 + 2 H2O</text>
        <dbReference type="Rhea" id="RHEA:57944"/>
        <dbReference type="ChEBI" id="CHEBI:15377"/>
        <dbReference type="ChEBI" id="CHEBI:15378"/>
        <dbReference type="ChEBI" id="CHEBI:16240"/>
        <dbReference type="ChEBI" id="CHEBI:16526"/>
        <dbReference type="ChEBI" id="CHEBI:60344"/>
        <dbReference type="ChEBI" id="CHEBI:142463"/>
    </reaction>
    <physiologicalReaction direction="left-to-right" evidence="1">
        <dbReference type="Rhea" id="RHEA:57945"/>
    </physiologicalReaction>
</comment>
<comment type="cofactor">
    <cofactor evidence="1">
        <name>Fe-coproporphyrin III</name>
        <dbReference type="ChEBI" id="CHEBI:68438"/>
    </cofactor>
    <text evidence="1">Fe-coproporphyrin III acts both as a substrate and a redox cofactor.</text>
</comment>
<comment type="pathway">
    <text evidence="1">Porphyrin-containing compound metabolism; protoheme biosynthesis.</text>
</comment>
<comment type="similarity">
    <text evidence="1">Belongs to the ChdC family. Type 1 subfamily.</text>
</comment>
<sequence>MSEAAETLDGWYSLHLFYAVDWATFRLVPEDEREAMINEFKTFINDKASAREQQAGDYALYNITGQKADILLWYLRPEMKELNEIENELNKLRIADFFIQTYSYVSVIELGNYLAGKSDEDPYQNPHVRARLYPELPRTEYICFYPMDKRRNETYNWYMLPMEERKKLMYNHGMIGRQYAGKIKQFITGSVGFDDFEWGVTLFSDDVLQFKKIVYEMRFDETTARYGEFGGFYIGHILKTDDFEHFFAI</sequence>
<gene>
    <name evidence="1" type="primary">chdC</name>
    <name type="ordered locus">SH2405</name>
</gene>
<dbReference type="EC" id="1.3.98.5" evidence="1"/>
<dbReference type="EMBL" id="AP006716">
    <property type="protein sequence ID" value="BAE05714.1"/>
    <property type="molecule type" value="Genomic_DNA"/>
</dbReference>
<dbReference type="SMR" id="Q4L3R3"/>
<dbReference type="KEGG" id="sha:SH2405"/>
<dbReference type="eggNOG" id="COG3253">
    <property type="taxonomic scope" value="Bacteria"/>
</dbReference>
<dbReference type="HOGENOM" id="CLU_063226_1_0_9"/>
<dbReference type="OrthoDB" id="9773646at2"/>
<dbReference type="UniPathway" id="UPA00252"/>
<dbReference type="Proteomes" id="UP000000543">
    <property type="component" value="Chromosome"/>
</dbReference>
<dbReference type="GO" id="GO:0020037">
    <property type="term" value="F:heme binding"/>
    <property type="evidence" value="ECO:0007669"/>
    <property type="project" value="InterPro"/>
</dbReference>
<dbReference type="GO" id="GO:0046872">
    <property type="term" value="F:metal ion binding"/>
    <property type="evidence" value="ECO:0007669"/>
    <property type="project" value="UniProtKB-KW"/>
</dbReference>
<dbReference type="GO" id="GO:0016634">
    <property type="term" value="F:oxidoreductase activity, acting on the CH-CH group of donors, oxygen as acceptor"/>
    <property type="evidence" value="ECO:0007669"/>
    <property type="project" value="UniProtKB-UniRule"/>
</dbReference>
<dbReference type="GO" id="GO:0004601">
    <property type="term" value="F:peroxidase activity"/>
    <property type="evidence" value="ECO:0007669"/>
    <property type="project" value="InterPro"/>
</dbReference>
<dbReference type="GO" id="GO:0006785">
    <property type="term" value="P:heme B biosynthetic process"/>
    <property type="evidence" value="ECO:0007669"/>
    <property type="project" value="UniProtKB-UniRule"/>
</dbReference>
<dbReference type="Gene3D" id="3.30.70.1030">
    <property type="entry name" value="Apc35880, domain 1"/>
    <property type="match status" value="2"/>
</dbReference>
<dbReference type="HAMAP" id="MF_01442">
    <property type="entry name" value="Coproheme_decarbox_1"/>
    <property type="match status" value="1"/>
</dbReference>
<dbReference type="InterPro" id="IPR031332">
    <property type="entry name" value="CHDC"/>
</dbReference>
<dbReference type="InterPro" id="IPR010644">
    <property type="entry name" value="ChdC/CLD"/>
</dbReference>
<dbReference type="InterPro" id="IPR011008">
    <property type="entry name" value="Dimeric_a/b-barrel"/>
</dbReference>
<dbReference type="NCBIfam" id="NF008913">
    <property type="entry name" value="PRK12276.1"/>
    <property type="match status" value="1"/>
</dbReference>
<dbReference type="PANTHER" id="PTHR36843:SF1">
    <property type="entry name" value="COPROHEME DECARBOXYLASE"/>
    <property type="match status" value="1"/>
</dbReference>
<dbReference type="PANTHER" id="PTHR36843">
    <property type="entry name" value="HEME-DEPENDENT PEROXIDASE YWFI-RELATED"/>
    <property type="match status" value="1"/>
</dbReference>
<dbReference type="Pfam" id="PF06778">
    <property type="entry name" value="Chlor_dismutase"/>
    <property type="match status" value="1"/>
</dbReference>
<dbReference type="SUPFAM" id="SSF54909">
    <property type="entry name" value="Dimeric alpha+beta barrel"/>
    <property type="match status" value="1"/>
</dbReference>
<accession>Q4L3R3</accession>
<evidence type="ECO:0000255" key="1">
    <source>
        <dbReference type="HAMAP-Rule" id="MF_01442"/>
    </source>
</evidence>
<name>CHDC_STAHJ</name>
<protein>
    <recommendedName>
        <fullName evidence="1">Coproheme decarboxylase</fullName>
        <ecNumber evidence="1">1.3.98.5</ecNumber>
    </recommendedName>
    <alternativeName>
        <fullName evidence="1">Coproheme III oxidative decarboxylase</fullName>
    </alternativeName>
    <alternativeName>
        <fullName evidence="1">Hydrogen peroxide-dependent heme synthase</fullName>
    </alternativeName>
</protein>
<organism>
    <name type="scientific">Staphylococcus haemolyticus (strain JCSC1435)</name>
    <dbReference type="NCBI Taxonomy" id="279808"/>
    <lineage>
        <taxon>Bacteria</taxon>
        <taxon>Bacillati</taxon>
        <taxon>Bacillota</taxon>
        <taxon>Bacilli</taxon>
        <taxon>Bacillales</taxon>
        <taxon>Staphylococcaceae</taxon>
        <taxon>Staphylococcus</taxon>
    </lineage>
</organism>
<proteinExistence type="inferred from homology"/>
<keyword id="KW-0349">Heme</keyword>
<keyword id="KW-0350">Heme biosynthesis</keyword>
<keyword id="KW-0408">Iron</keyword>
<keyword id="KW-0479">Metal-binding</keyword>
<keyword id="KW-0560">Oxidoreductase</keyword>
<feature type="chain" id="PRO_0000294056" description="Coproheme decarboxylase">
    <location>
        <begin position="1"/>
        <end position="249"/>
    </location>
</feature>
<feature type="active site" evidence="1">
    <location>
        <position position="145"/>
    </location>
</feature>
<feature type="binding site" evidence="1">
    <location>
        <position position="131"/>
    </location>
    <ligand>
        <name>Fe-coproporphyrin III</name>
        <dbReference type="ChEBI" id="CHEBI:68438"/>
    </ligand>
</feature>
<feature type="binding site" evidence="1">
    <location>
        <begin position="145"/>
        <end position="149"/>
    </location>
    <ligand>
        <name>Fe-coproporphyrin III</name>
        <dbReference type="ChEBI" id="CHEBI:68438"/>
    </ligand>
</feature>
<feature type="binding site" description="axial binding residue" evidence="1">
    <location>
        <position position="172"/>
    </location>
    <ligand>
        <name>Fe-coproporphyrin III</name>
        <dbReference type="ChEBI" id="CHEBI:68438"/>
    </ligand>
    <ligandPart>
        <name>Fe</name>
        <dbReference type="ChEBI" id="CHEBI:18248"/>
    </ligandPart>
</feature>
<feature type="binding site" evidence="1">
    <location>
        <position position="185"/>
    </location>
    <ligand>
        <name>Fe-coproporphyrin III</name>
        <dbReference type="ChEBI" id="CHEBI:68438"/>
    </ligand>
</feature>
<reference key="1">
    <citation type="journal article" date="2005" name="J. Bacteriol.">
        <title>Whole-genome sequencing of Staphylococcus haemolyticus uncovers the extreme plasticity of its genome and the evolution of human-colonizing staphylococcal species.</title>
        <authorList>
            <person name="Takeuchi F."/>
            <person name="Watanabe S."/>
            <person name="Baba T."/>
            <person name="Yuzawa H."/>
            <person name="Ito T."/>
            <person name="Morimoto Y."/>
            <person name="Kuroda M."/>
            <person name="Cui L."/>
            <person name="Takahashi M."/>
            <person name="Ankai A."/>
            <person name="Baba S."/>
            <person name="Fukui S."/>
            <person name="Lee J.C."/>
            <person name="Hiramatsu K."/>
        </authorList>
    </citation>
    <scope>NUCLEOTIDE SEQUENCE [LARGE SCALE GENOMIC DNA]</scope>
    <source>
        <strain>JCSC1435</strain>
    </source>
</reference>